<organism>
    <name type="scientific">Mus musculus</name>
    <name type="common">Mouse</name>
    <dbReference type="NCBI Taxonomy" id="10090"/>
    <lineage>
        <taxon>Eukaryota</taxon>
        <taxon>Metazoa</taxon>
        <taxon>Chordata</taxon>
        <taxon>Craniata</taxon>
        <taxon>Vertebrata</taxon>
        <taxon>Euteleostomi</taxon>
        <taxon>Mammalia</taxon>
        <taxon>Eutheria</taxon>
        <taxon>Euarchontoglires</taxon>
        <taxon>Glires</taxon>
        <taxon>Rodentia</taxon>
        <taxon>Myomorpha</taxon>
        <taxon>Muroidea</taxon>
        <taxon>Muridae</taxon>
        <taxon>Murinae</taxon>
        <taxon>Mus</taxon>
        <taxon>Mus</taxon>
    </lineage>
</organism>
<proteinExistence type="evidence at protein level"/>
<sequence>MTLRRLRKLQQKEEATAAPDPAGRAPDSEAARAAPLPSGPPAAAAPPGAPGEELYAALEDYHPAELYRALAVSGGTLPRRKGSGFRWKNFTQSPEQQRKVLTLEKGDNQTFGFEIQTYGLHHREEQRVEMVTFVCRVHESSPAQLAGLTPGDTIASVNGLNVEGIRHREIVDIIKASGNVLRLETLYGTSIRKAELEARLQYLKQTLYEKWGEYRSLMVQEQRLVHGLVVKDPSIYDTLESVRSCLYGAGLLPGSLPFGPLLAAPGSARGGARRAKGDTDDAVYHTCFFGGAEPQALPPPPPPARALGPSSAETPASVLFPAPRSTLSRSASVRCAGPGGGGGAPGALWTEAREQALCGAGLRKTKYRSFRRRLLKFIPGLNRSLEEEESQL</sequence>
<protein>
    <recommendedName>
        <fullName>General receptor for phosphoinositides 1-associated scaffold protein</fullName>
        <shortName>GRP1-associated scaffold protein</shortName>
    </recommendedName>
</protein>
<evidence type="ECO:0000250" key="1"/>
<evidence type="ECO:0000250" key="2">
    <source>
        <dbReference type="UniProtKB" id="Q7Z6J2"/>
    </source>
</evidence>
<evidence type="ECO:0000250" key="3">
    <source>
        <dbReference type="UniProtKB" id="Q8R4T5"/>
    </source>
</evidence>
<evidence type="ECO:0000255" key="4">
    <source>
        <dbReference type="PROSITE-ProRule" id="PRU00143"/>
    </source>
</evidence>
<evidence type="ECO:0000256" key="5">
    <source>
        <dbReference type="SAM" id="MobiDB-lite"/>
    </source>
</evidence>
<evidence type="ECO:0000269" key="6">
    <source>
    </source>
</evidence>
<evidence type="ECO:0000269" key="7">
    <source>
    </source>
</evidence>
<evidence type="ECO:0000303" key="8">
    <source>
    </source>
</evidence>
<evidence type="ECO:0000305" key="9"/>
<evidence type="ECO:0007744" key="10">
    <source>
    </source>
</evidence>
<evidence type="ECO:0007744" key="11">
    <source>
    </source>
</evidence>
<reference key="1">
    <citation type="journal article" date="2000" name="J. Biol. Chem.">
        <title>Interaction of GRASP, a protein encoded by a novel retinoic acid-induced gene, with members of the cytohesin family of guanine nucleotide exchange factors.</title>
        <authorList>
            <person name="Nevrivy D.J."/>
            <person name="Peterson V.J."/>
            <person name="Avram D."/>
            <person name="Ishmael J.E."/>
            <person name="Hansen S.G."/>
            <person name="Dowell P."/>
            <person name="Hruby D.E."/>
            <person name="Dawson M.I."/>
            <person name="Leid M."/>
        </authorList>
    </citation>
    <scope>NUCLEOTIDE SEQUENCE [MRNA]</scope>
    <scope>TISSUE SPECIFICITY</scope>
    <scope>INTERACTION WITH CYTH3</scope>
    <scope>SUBCELLULAR LOCATION</scope>
</reference>
<reference key="2">
    <citation type="submission" date="2000-04" db="EMBL/GenBank/DDBJ databases">
        <title>Isolation of full-length cDNA clones from mouse brain cDNA library made by oligo-capping method.</title>
        <authorList>
            <person name="Osada N."/>
            <person name="Kusuda J."/>
            <person name="Tanuma R."/>
            <person name="Ito A."/>
            <person name="Hirata M."/>
            <person name="Sugano S."/>
            <person name="Hashimoto K."/>
        </authorList>
    </citation>
    <scope>NUCLEOTIDE SEQUENCE [LARGE SCALE MRNA]</scope>
    <source>
        <strain>C57BL/6J</strain>
        <tissue>Brain</tissue>
    </source>
</reference>
<reference key="3">
    <citation type="journal article" date="2004" name="Genome Res.">
        <title>The status, quality, and expansion of the NIH full-length cDNA project: the Mammalian Gene Collection (MGC).</title>
        <authorList>
            <consortium name="The MGC Project Team"/>
        </authorList>
    </citation>
    <scope>NUCLEOTIDE SEQUENCE [LARGE SCALE MRNA]</scope>
    <source>
        <tissue>Olfactory epithelium</tissue>
    </source>
</reference>
<reference key="4">
    <citation type="journal article" date="2002" name="J. Neurosci.">
        <title>Tamalin, a PDZ domain-containing protein, links a protein complex formation of group 1 metabotropic glutamate receptors and the guanine nucleotide exchange factor cytohesins.</title>
        <authorList>
            <person name="Kitano J."/>
            <person name="Kimura K."/>
            <person name="Yamazaki Y."/>
            <person name="Soda T."/>
            <person name="Shigemoto R."/>
            <person name="Nakajima Y."/>
            <person name="Nakanishi S."/>
        </authorList>
    </citation>
    <scope>TISSUE SPECIFICITY</scope>
</reference>
<reference key="5">
    <citation type="journal article" date="2010" name="Cell">
        <title>A tissue-specific atlas of mouse protein phosphorylation and expression.</title>
        <authorList>
            <person name="Huttlin E.L."/>
            <person name="Jedrychowski M.P."/>
            <person name="Elias J.E."/>
            <person name="Goswami T."/>
            <person name="Rad R."/>
            <person name="Beausoleil S.A."/>
            <person name="Villen J."/>
            <person name="Haas W."/>
            <person name="Sowa M.E."/>
            <person name="Gygi S.P."/>
        </authorList>
    </citation>
    <scope>PHOSPHORYLATION [LARGE SCALE ANALYSIS] AT THR-76 AND SER-384</scope>
    <scope>IDENTIFICATION BY MASS SPECTROMETRY [LARGE SCALE ANALYSIS]</scope>
    <source>
        <tissue>Brain</tissue>
        <tissue>Kidney</tissue>
    </source>
</reference>
<reference key="6">
    <citation type="journal article" date="2014" name="Mol. Cell. Proteomics">
        <title>Immunoaffinity enrichment and mass spectrometry analysis of protein methylation.</title>
        <authorList>
            <person name="Guo A."/>
            <person name="Gu H."/>
            <person name="Zhou J."/>
            <person name="Mulhern D."/>
            <person name="Wang Y."/>
            <person name="Lee K.A."/>
            <person name="Yang V."/>
            <person name="Aguiar M."/>
            <person name="Kornhauser J."/>
            <person name="Jia X."/>
            <person name="Ren J."/>
            <person name="Beausoleil S.A."/>
            <person name="Silva J.C."/>
            <person name="Vemulapalli V."/>
            <person name="Bedford M.T."/>
            <person name="Comb M.J."/>
        </authorList>
    </citation>
    <scope>METHYLATION [LARGE SCALE ANALYSIS] AT ARG-269</scope>
    <scope>IDENTIFICATION BY MASS SPECTROMETRY [LARGE SCALE ANALYSIS]</scope>
    <source>
        <tissue>Brain</tissue>
        <tissue>Embryo</tissue>
    </source>
</reference>
<accession>Q9JJA9</accession>
<accession>Q9JKL0</accession>
<gene>
    <name evidence="8" type="primary">Tamalin</name>
    <name type="synonym">Grasp</name>
    <name type="ORF">MNCb-4428</name>
</gene>
<comment type="function">
    <text evidence="1">Plays a role in intracellular trafficking and contributes to the macromolecular organization of group 1 metabotropic glutamate receptors (mGluRs) at synapses.</text>
</comment>
<comment type="subunit">
    <text evidence="3 6">Heteromer. Composed of TAMALIN, CYTH2 and at least one GRM1. Also interacts with GRM2, GRM3 and GRM5 (By similarity). Interacts with CYTH3 (PubMed:10828067).</text>
</comment>
<comment type="subcellular location">
    <subcellularLocation>
        <location evidence="3">Cytoplasm</location>
        <location evidence="3">Perinuclear region</location>
    </subcellularLocation>
    <subcellularLocation>
        <location evidence="3">Cell membrane</location>
        <topology evidence="3">Peripheral membrane protein</topology>
        <orientation evidence="3">Cytoplasmic side</orientation>
    </subcellularLocation>
    <subcellularLocation>
        <location evidence="3">Postsynaptic cell membrane</location>
    </subcellularLocation>
</comment>
<comment type="tissue specificity">
    <text evidence="6 7">Highly expressed in brain, heart and lung, and to a lower extent in embryo, kidney and ovary.</text>
</comment>
<feature type="chain" id="PRO_0000087585" description="General receptor for phosphoinositides 1-associated scaffold protein">
    <location>
        <begin position="1"/>
        <end position="392"/>
    </location>
</feature>
<feature type="domain" description="PDZ" evidence="4">
    <location>
        <begin position="100"/>
        <end position="189"/>
    </location>
</feature>
<feature type="region of interest" description="Disordered" evidence="5">
    <location>
        <begin position="1"/>
        <end position="50"/>
    </location>
</feature>
<feature type="region of interest" description="Interaction with PSCD3" evidence="6">
    <location>
        <begin position="180"/>
        <end position="257"/>
    </location>
</feature>
<feature type="region of interest" description="Disordered" evidence="5">
    <location>
        <begin position="294"/>
        <end position="315"/>
    </location>
</feature>
<feature type="compositionally biased region" description="Pro residues" evidence="5">
    <location>
        <begin position="37"/>
        <end position="49"/>
    </location>
</feature>
<feature type="modified residue" description="Phosphothreonine" evidence="10">
    <location>
        <position position="76"/>
    </location>
</feature>
<feature type="modified residue" description="Phosphoserine" evidence="3">
    <location>
        <position position="93"/>
    </location>
</feature>
<feature type="modified residue" description="Phosphotyrosine" evidence="2">
    <location>
        <position position="236"/>
    </location>
</feature>
<feature type="modified residue" description="Omega-N-methylarginine" evidence="11">
    <location>
        <position position="269"/>
    </location>
</feature>
<feature type="modified residue" description="Phosphoserine" evidence="10">
    <location>
        <position position="384"/>
    </location>
</feature>
<feature type="sequence conflict" description="In Ref. 2; BAA95086." evidence="9" ref="2">
    <original>P</original>
    <variation>L</variation>
    <location>
        <position position="299"/>
    </location>
</feature>
<keyword id="KW-1003">Cell membrane</keyword>
<keyword id="KW-0963">Cytoplasm</keyword>
<keyword id="KW-0472">Membrane</keyword>
<keyword id="KW-0488">Methylation</keyword>
<keyword id="KW-0597">Phosphoprotein</keyword>
<keyword id="KW-0628">Postsynaptic cell membrane</keyword>
<keyword id="KW-1185">Reference proteome</keyword>
<keyword id="KW-0770">Synapse</keyword>
<dbReference type="EMBL" id="AF236099">
    <property type="protein sequence ID" value="AAF36997.1"/>
    <property type="molecule type" value="mRNA"/>
</dbReference>
<dbReference type="EMBL" id="AB041603">
    <property type="protein sequence ID" value="BAA95086.1"/>
    <property type="molecule type" value="mRNA"/>
</dbReference>
<dbReference type="EMBL" id="BC046307">
    <property type="protein sequence ID" value="AAH46307.1"/>
    <property type="molecule type" value="mRNA"/>
</dbReference>
<dbReference type="CCDS" id="CCDS27847.1"/>
<dbReference type="RefSeq" id="NP_062391.3">
    <property type="nucleotide sequence ID" value="NM_019518.3"/>
</dbReference>
<dbReference type="SMR" id="Q9JJA9"/>
<dbReference type="BioGRID" id="207817">
    <property type="interactions" value="6"/>
</dbReference>
<dbReference type="FunCoup" id="Q9JJA9">
    <property type="interactions" value="280"/>
</dbReference>
<dbReference type="IntAct" id="Q9JJA9">
    <property type="interactions" value="1"/>
</dbReference>
<dbReference type="MINT" id="Q9JJA9"/>
<dbReference type="STRING" id="10090.ENSMUSP00000000543"/>
<dbReference type="iPTMnet" id="Q9JJA9"/>
<dbReference type="PhosphoSitePlus" id="Q9JJA9"/>
<dbReference type="jPOST" id="Q9JJA9"/>
<dbReference type="PaxDb" id="10090-ENSMUSP00000000543"/>
<dbReference type="PeptideAtlas" id="Q9JJA9"/>
<dbReference type="ProteomicsDB" id="271054"/>
<dbReference type="Antibodypedia" id="26519">
    <property type="antibodies" value="92 antibodies from 24 providers"/>
</dbReference>
<dbReference type="DNASU" id="56149"/>
<dbReference type="Ensembl" id="ENSMUST00000000543.6">
    <property type="protein sequence ID" value="ENSMUSP00000000543.5"/>
    <property type="gene ID" value="ENSMUSG00000000531.6"/>
</dbReference>
<dbReference type="GeneID" id="56149"/>
<dbReference type="KEGG" id="mmu:56149"/>
<dbReference type="UCSC" id="uc007xsu.1">
    <property type="organism name" value="mouse"/>
</dbReference>
<dbReference type="AGR" id="MGI:1860303"/>
<dbReference type="CTD" id="160622"/>
<dbReference type="MGI" id="MGI:1860303">
    <property type="gene designation" value="Tamalin"/>
</dbReference>
<dbReference type="VEuPathDB" id="HostDB:ENSMUSG00000000531"/>
<dbReference type="eggNOG" id="KOG3528">
    <property type="taxonomic scope" value="Eukaryota"/>
</dbReference>
<dbReference type="GeneTree" id="ENSGT00530000063734"/>
<dbReference type="HOGENOM" id="CLU_058640_0_0_1"/>
<dbReference type="InParanoid" id="Q9JJA9"/>
<dbReference type="OMA" id="YQTCIYQ"/>
<dbReference type="OrthoDB" id="10041077at2759"/>
<dbReference type="PhylomeDB" id="Q9JJA9"/>
<dbReference type="TreeFam" id="TF316315"/>
<dbReference type="BioGRID-ORCS" id="56149">
    <property type="hits" value="5 hits in 77 CRISPR screens"/>
</dbReference>
<dbReference type="CD-CODE" id="CE726F99">
    <property type="entry name" value="Postsynaptic density"/>
</dbReference>
<dbReference type="ChiTaRS" id="Grasp">
    <property type="organism name" value="mouse"/>
</dbReference>
<dbReference type="PRO" id="PR:Q9JJA9"/>
<dbReference type="Proteomes" id="UP000000589">
    <property type="component" value="Chromosome 15"/>
</dbReference>
<dbReference type="RNAct" id="Q9JJA9">
    <property type="molecule type" value="protein"/>
</dbReference>
<dbReference type="Bgee" id="ENSMUSG00000000531">
    <property type="expression patterns" value="Expressed in dorsal pancreas and 198 other cell types or tissues"/>
</dbReference>
<dbReference type="GO" id="GO:0005737">
    <property type="term" value="C:cytoplasm"/>
    <property type="evidence" value="ECO:0000266"/>
    <property type="project" value="MGI"/>
</dbReference>
<dbReference type="GO" id="GO:0098978">
    <property type="term" value="C:glutamatergic synapse"/>
    <property type="evidence" value="ECO:0000314"/>
    <property type="project" value="SynGO"/>
</dbReference>
<dbReference type="GO" id="GO:0005641">
    <property type="term" value="C:nuclear envelope lumen"/>
    <property type="evidence" value="ECO:0000266"/>
    <property type="project" value="MGI"/>
</dbReference>
<dbReference type="GO" id="GO:0048471">
    <property type="term" value="C:perinuclear region of cytoplasm"/>
    <property type="evidence" value="ECO:0007669"/>
    <property type="project" value="UniProtKB-SubCell"/>
</dbReference>
<dbReference type="GO" id="GO:0005886">
    <property type="term" value="C:plasma membrane"/>
    <property type="evidence" value="ECO:0000314"/>
    <property type="project" value="MGI"/>
</dbReference>
<dbReference type="GO" id="GO:0014069">
    <property type="term" value="C:postsynaptic density"/>
    <property type="evidence" value="ECO:0007669"/>
    <property type="project" value="Ensembl"/>
</dbReference>
<dbReference type="GO" id="GO:0045211">
    <property type="term" value="C:postsynaptic membrane"/>
    <property type="evidence" value="ECO:0007669"/>
    <property type="project" value="UniProtKB-SubCell"/>
</dbReference>
<dbReference type="GO" id="GO:0042802">
    <property type="term" value="F:identical protein binding"/>
    <property type="evidence" value="ECO:0007669"/>
    <property type="project" value="Ensembl"/>
</dbReference>
<dbReference type="GO" id="GO:0030165">
    <property type="term" value="F:PDZ domain binding"/>
    <property type="evidence" value="ECO:0007669"/>
    <property type="project" value="Ensembl"/>
</dbReference>
<dbReference type="GO" id="GO:0031267">
    <property type="term" value="F:small GTPase binding"/>
    <property type="evidence" value="ECO:0007669"/>
    <property type="project" value="Ensembl"/>
</dbReference>
<dbReference type="GO" id="GO:0006886">
    <property type="term" value="P:intracellular protein transport"/>
    <property type="evidence" value="ECO:0000266"/>
    <property type="project" value="MGI"/>
</dbReference>
<dbReference type="GO" id="GO:0099149">
    <property type="term" value="P:regulation of postsynaptic neurotransmitter receptor internalization"/>
    <property type="evidence" value="ECO:0000314"/>
    <property type="project" value="SynGO"/>
</dbReference>
<dbReference type="GO" id="GO:0007165">
    <property type="term" value="P:signal transduction"/>
    <property type="evidence" value="ECO:0000353"/>
    <property type="project" value="MGI"/>
</dbReference>
<dbReference type="CDD" id="cd06713">
    <property type="entry name" value="PDZ_tamalin_CYTIP-like"/>
    <property type="match status" value="1"/>
</dbReference>
<dbReference type="FunFam" id="2.30.42.10:FF:000157">
    <property type="entry name" value="General receptor for phosphoinositides 1-associated scaffold protein"/>
    <property type="match status" value="1"/>
</dbReference>
<dbReference type="Gene3D" id="2.30.42.10">
    <property type="match status" value="1"/>
</dbReference>
<dbReference type="InterPro" id="IPR052122">
    <property type="entry name" value="Intracell_Traff_Signaling_Reg"/>
</dbReference>
<dbReference type="InterPro" id="IPR001478">
    <property type="entry name" value="PDZ"/>
</dbReference>
<dbReference type="InterPro" id="IPR036034">
    <property type="entry name" value="PDZ_sf"/>
</dbReference>
<dbReference type="PANTHER" id="PTHR15963">
    <property type="entry name" value="GENERAL RECEPTOR FOR PHOSPHOINOSITIDES 1-ASSOCIATED SCAFFOLD PROTEIN-RELATED"/>
    <property type="match status" value="1"/>
</dbReference>
<dbReference type="PANTHER" id="PTHR15963:SF3">
    <property type="entry name" value="PROTEIN TAMALIN"/>
    <property type="match status" value="1"/>
</dbReference>
<dbReference type="Pfam" id="PF00595">
    <property type="entry name" value="PDZ"/>
    <property type="match status" value="1"/>
</dbReference>
<dbReference type="SMART" id="SM00228">
    <property type="entry name" value="PDZ"/>
    <property type="match status" value="1"/>
</dbReference>
<dbReference type="SUPFAM" id="SSF50156">
    <property type="entry name" value="PDZ domain-like"/>
    <property type="match status" value="1"/>
</dbReference>
<dbReference type="PROSITE" id="PS50106">
    <property type="entry name" value="PDZ"/>
    <property type="match status" value="1"/>
</dbReference>
<name>GRASP_MOUSE</name>